<accession>Q2RI92</accession>
<name>EFP_MOOTA</name>
<proteinExistence type="inferred from homology"/>
<sequence length="185" mass="20955">MISTNDFRTGLTIEVDGDVYTVVEFMHVKPGKGSAFVRTKLKNRRTGAVIERTFRAGEKVNRAHVERREMQYLYNDGDNYYFMDTETFEQLSLRKEQLEDAIKYLKDNMNIFVLTYNGETIGIELPNSVELKVVETEPGIKGDTATGGTKNAVLETGAVIQVPLFIETGDVVRIDTRTGEYIERA</sequence>
<dbReference type="EMBL" id="CP000232">
    <property type="protein sequence ID" value="ABC19847.1"/>
    <property type="molecule type" value="Genomic_DNA"/>
</dbReference>
<dbReference type="RefSeq" id="YP_430390.1">
    <property type="nucleotide sequence ID" value="NC_007644.1"/>
</dbReference>
<dbReference type="SMR" id="Q2RI92"/>
<dbReference type="STRING" id="264732.Moth_1538"/>
<dbReference type="EnsemblBacteria" id="ABC19847">
    <property type="protein sequence ID" value="ABC19847"/>
    <property type="gene ID" value="Moth_1538"/>
</dbReference>
<dbReference type="KEGG" id="mta:Moth_1538"/>
<dbReference type="PATRIC" id="fig|264732.11.peg.1664"/>
<dbReference type="eggNOG" id="COG0231">
    <property type="taxonomic scope" value="Bacteria"/>
</dbReference>
<dbReference type="HOGENOM" id="CLU_074944_0_1_9"/>
<dbReference type="OrthoDB" id="9801844at2"/>
<dbReference type="UniPathway" id="UPA00345"/>
<dbReference type="GO" id="GO:0005737">
    <property type="term" value="C:cytoplasm"/>
    <property type="evidence" value="ECO:0007669"/>
    <property type="project" value="UniProtKB-SubCell"/>
</dbReference>
<dbReference type="GO" id="GO:0003746">
    <property type="term" value="F:translation elongation factor activity"/>
    <property type="evidence" value="ECO:0007669"/>
    <property type="project" value="UniProtKB-UniRule"/>
</dbReference>
<dbReference type="GO" id="GO:0043043">
    <property type="term" value="P:peptide biosynthetic process"/>
    <property type="evidence" value="ECO:0007669"/>
    <property type="project" value="InterPro"/>
</dbReference>
<dbReference type="CDD" id="cd04470">
    <property type="entry name" value="S1_EF-P_repeat_1"/>
    <property type="match status" value="1"/>
</dbReference>
<dbReference type="CDD" id="cd05794">
    <property type="entry name" value="S1_EF-P_repeat_2"/>
    <property type="match status" value="1"/>
</dbReference>
<dbReference type="FunFam" id="2.30.30.30:FF:000003">
    <property type="entry name" value="Elongation factor P"/>
    <property type="match status" value="1"/>
</dbReference>
<dbReference type="FunFam" id="2.40.50.140:FF:000004">
    <property type="entry name" value="Elongation factor P"/>
    <property type="match status" value="1"/>
</dbReference>
<dbReference type="FunFam" id="2.40.50.140:FF:000009">
    <property type="entry name" value="Elongation factor P"/>
    <property type="match status" value="1"/>
</dbReference>
<dbReference type="Gene3D" id="2.30.30.30">
    <property type="match status" value="1"/>
</dbReference>
<dbReference type="Gene3D" id="2.40.50.140">
    <property type="entry name" value="Nucleic acid-binding proteins"/>
    <property type="match status" value="2"/>
</dbReference>
<dbReference type="HAMAP" id="MF_00141">
    <property type="entry name" value="EF_P"/>
    <property type="match status" value="1"/>
</dbReference>
<dbReference type="InterPro" id="IPR015365">
    <property type="entry name" value="Elong-fact-P_C"/>
</dbReference>
<dbReference type="InterPro" id="IPR012340">
    <property type="entry name" value="NA-bd_OB-fold"/>
</dbReference>
<dbReference type="InterPro" id="IPR014722">
    <property type="entry name" value="Rib_uL2_dom2"/>
</dbReference>
<dbReference type="InterPro" id="IPR020599">
    <property type="entry name" value="Transl_elong_fac_P/YeiP"/>
</dbReference>
<dbReference type="InterPro" id="IPR013185">
    <property type="entry name" value="Transl_elong_KOW-like"/>
</dbReference>
<dbReference type="InterPro" id="IPR001059">
    <property type="entry name" value="Transl_elong_P/YeiP_cen"/>
</dbReference>
<dbReference type="InterPro" id="IPR013852">
    <property type="entry name" value="Transl_elong_P/YeiP_CS"/>
</dbReference>
<dbReference type="InterPro" id="IPR011768">
    <property type="entry name" value="Transl_elongation_fac_P"/>
</dbReference>
<dbReference type="InterPro" id="IPR008991">
    <property type="entry name" value="Translation_prot_SH3-like_sf"/>
</dbReference>
<dbReference type="NCBIfam" id="TIGR00038">
    <property type="entry name" value="efp"/>
    <property type="match status" value="1"/>
</dbReference>
<dbReference type="NCBIfam" id="NF001810">
    <property type="entry name" value="PRK00529.1"/>
    <property type="match status" value="1"/>
</dbReference>
<dbReference type="PANTHER" id="PTHR30053">
    <property type="entry name" value="ELONGATION FACTOR P"/>
    <property type="match status" value="1"/>
</dbReference>
<dbReference type="PANTHER" id="PTHR30053:SF12">
    <property type="entry name" value="ELONGATION FACTOR P (EF-P) FAMILY PROTEIN"/>
    <property type="match status" value="1"/>
</dbReference>
<dbReference type="Pfam" id="PF01132">
    <property type="entry name" value="EFP"/>
    <property type="match status" value="1"/>
</dbReference>
<dbReference type="Pfam" id="PF08207">
    <property type="entry name" value="EFP_N"/>
    <property type="match status" value="1"/>
</dbReference>
<dbReference type="Pfam" id="PF09285">
    <property type="entry name" value="Elong-fact-P_C"/>
    <property type="match status" value="1"/>
</dbReference>
<dbReference type="PIRSF" id="PIRSF005901">
    <property type="entry name" value="EF-P"/>
    <property type="match status" value="1"/>
</dbReference>
<dbReference type="SMART" id="SM01185">
    <property type="entry name" value="EFP"/>
    <property type="match status" value="1"/>
</dbReference>
<dbReference type="SMART" id="SM00841">
    <property type="entry name" value="Elong-fact-P_C"/>
    <property type="match status" value="1"/>
</dbReference>
<dbReference type="SUPFAM" id="SSF50249">
    <property type="entry name" value="Nucleic acid-binding proteins"/>
    <property type="match status" value="2"/>
</dbReference>
<dbReference type="SUPFAM" id="SSF50104">
    <property type="entry name" value="Translation proteins SH3-like domain"/>
    <property type="match status" value="1"/>
</dbReference>
<dbReference type="PROSITE" id="PS01275">
    <property type="entry name" value="EFP"/>
    <property type="match status" value="1"/>
</dbReference>
<organism>
    <name type="scientific">Moorella thermoacetica (strain ATCC 39073 / JCM 9320)</name>
    <dbReference type="NCBI Taxonomy" id="264732"/>
    <lineage>
        <taxon>Bacteria</taxon>
        <taxon>Bacillati</taxon>
        <taxon>Bacillota</taxon>
        <taxon>Clostridia</taxon>
        <taxon>Moorellales</taxon>
        <taxon>Moorellaceae</taxon>
        <taxon>Moorella</taxon>
    </lineage>
</organism>
<evidence type="ECO:0000255" key="1">
    <source>
        <dbReference type="HAMAP-Rule" id="MF_00141"/>
    </source>
</evidence>
<reference key="1">
    <citation type="journal article" date="2008" name="Environ. Microbiol.">
        <title>The complete genome sequence of Moorella thermoacetica (f. Clostridium thermoaceticum).</title>
        <authorList>
            <person name="Pierce E."/>
            <person name="Xie G."/>
            <person name="Barabote R.D."/>
            <person name="Saunders E."/>
            <person name="Han C.S."/>
            <person name="Detter J.C."/>
            <person name="Richardson P."/>
            <person name="Brettin T.S."/>
            <person name="Das A."/>
            <person name="Ljungdahl L.G."/>
            <person name="Ragsdale S.W."/>
        </authorList>
    </citation>
    <scope>NUCLEOTIDE SEQUENCE [LARGE SCALE GENOMIC DNA]</scope>
    <source>
        <strain>ATCC 39073 / JCM 9320</strain>
    </source>
</reference>
<gene>
    <name evidence="1" type="primary">efp</name>
    <name type="ordered locus">Moth_1538</name>
</gene>
<keyword id="KW-0963">Cytoplasm</keyword>
<keyword id="KW-0251">Elongation factor</keyword>
<keyword id="KW-0648">Protein biosynthesis</keyword>
<feature type="chain" id="PRO_1000010777" description="Elongation factor P">
    <location>
        <begin position="1"/>
        <end position="185"/>
    </location>
</feature>
<protein>
    <recommendedName>
        <fullName evidence="1">Elongation factor P</fullName>
        <shortName evidence="1">EF-P</shortName>
    </recommendedName>
</protein>
<comment type="function">
    <text evidence="1">Involved in peptide bond synthesis. Stimulates efficient translation and peptide-bond synthesis on native or reconstituted 70S ribosomes in vitro. Probably functions indirectly by altering the affinity of the ribosome for aminoacyl-tRNA, thus increasing their reactivity as acceptors for peptidyl transferase.</text>
</comment>
<comment type="pathway">
    <text evidence="1">Protein biosynthesis; polypeptide chain elongation.</text>
</comment>
<comment type="subcellular location">
    <subcellularLocation>
        <location evidence="1">Cytoplasm</location>
    </subcellularLocation>
</comment>
<comment type="similarity">
    <text evidence="1">Belongs to the elongation factor P family.</text>
</comment>